<accession>Q8T0Q4</accession>
<accession>Q9V543</accession>
<reference evidence="16" key="1">
    <citation type="journal article" date="2000" name="Science">
        <title>The genome sequence of Drosophila melanogaster.</title>
        <authorList>
            <person name="Adams M.D."/>
            <person name="Celniker S.E."/>
            <person name="Holt R.A."/>
            <person name="Evans C.A."/>
            <person name="Gocayne J.D."/>
            <person name="Amanatides P.G."/>
            <person name="Scherer S.E."/>
            <person name="Li P.W."/>
            <person name="Hoskins R.A."/>
            <person name="Galle R.F."/>
            <person name="George R.A."/>
            <person name="Lewis S.E."/>
            <person name="Richards S."/>
            <person name="Ashburner M."/>
            <person name="Henderson S.N."/>
            <person name="Sutton G.G."/>
            <person name="Wortman J.R."/>
            <person name="Yandell M.D."/>
            <person name="Zhang Q."/>
            <person name="Chen L.X."/>
            <person name="Brandon R.C."/>
            <person name="Rogers Y.-H.C."/>
            <person name="Blazej R.G."/>
            <person name="Champe M."/>
            <person name="Pfeiffer B.D."/>
            <person name="Wan K.H."/>
            <person name="Doyle C."/>
            <person name="Baxter E.G."/>
            <person name="Helt G."/>
            <person name="Nelson C.R."/>
            <person name="Miklos G.L.G."/>
            <person name="Abril J.F."/>
            <person name="Agbayani A."/>
            <person name="An H.-J."/>
            <person name="Andrews-Pfannkoch C."/>
            <person name="Baldwin D."/>
            <person name="Ballew R.M."/>
            <person name="Basu A."/>
            <person name="Baxendale J."/>
            <person name="Bayraktaroglu L."/>
            <person name="Beasley E.M."/>
            <person name="Beeson K.Y."/>
            <person name="Benos P.V."/>
            <person name="Berman B.P."/>
            <person name="Bhandari D."/>
            <person name="Bolshakov S."/>
            <person name="Borkova D."/>
            <person name="Botchan M.R."/>
            <person name="Bouck J."/>
            <person name="Brokstein P."/>
            <person name="Brottier P."/>
            <person name="Burtis K.C."/>
            <person name="Busam D.A."/>
            <person name="Butler H."/>
            <person name="Cadieu E."/>
            <person name="Center A."/>
            <person name="Chandra I."/>
            <person name="Cherry J.M."/>
            <person name="Cawley S."/>
            <person name="Dahlke C."/>
            <person name="Davenport L.B."/>
            <person name="Davies P."/>
            <person name="de Pablos B."/>
            <person name="Delcher A."/>
            <person name="Deng Z."/>
            <person name="Mays A.D."/>
            <person name="Dew I."/>
            <person name="Dietz S.M."/>
            <person name="Dodson K."/>
            <person name="Doup L.E."/>
            <person name="Downes M."/>
            <person name="Dugan-Rocha S."/>
            <person name="Dunkov B.C."/>
            <person name="Dunn P."/>
            <person name="Durbin K.J."/>
            <person name="Evangelista C.C."/>
            <person name="Ferraz C."/>
            <person name="Ferriera S."/>
            <person name="Fleischmann W."/>
            <person name="Fosler C."/>
            <person name="Gabrielian A.E."/>
            <person name="Garg N.S."/>
            <person name="Gelbart W.M."/>
            <person name="Glasser K."/>
            <person name="Glodek A."/>
            <person name="Gong F."/>
            <person name="Gorrell J.H."/>
            <person name="Gu Z."/>
            <person name="Guan P."/>
            <person name="Harris M."/>
            <person name="Harris N.L."/>
            <person name="Harvey D.A."/>
            <person name="Heiman T.J."/>
            <person name="Hernandez J.R."/>
            <person name="Houck J."/>
            <person name="Hostin D."/>
            <person name="Houston K.A."/>
            <person name="Howland T.J."/>
            <person name="Wei M.-H."/>
            <person name="Ibegwam C."/>
            <person name="Jalali M."/>
            <person name="Kalush F."/>
            <person name="Karpen G.H."/>
            <person name="Ke Z."/>
            <person name="Kennison J.A."/>
            <person name="Ketchum K.A."/>
            <person name="Kimmel B.E."/>
            <person name="Kodira C.D."/>
            <person name="Kraft C.L."/>
            <person name="Kravitz S."/>
            <person name="Kulp D."/>
            <person name="Lai Z."/>
            <person name="Lasko P."/>
            <person name="Lei Y."/>
            <person name="Levitsky A.A."/>
            <person name="Li J.H."/>
            <person name="Li Z."/>
            <person name="Liang Y."/>
            <person name="Lin X."/>
            <person name="Liu X."/>
            <person name="Mattei B."/>
            <person name="McIntosh T.C."/>
            <person name="McLeod M.P."/>
            <person name="McPherson D."/>
            <person name="Merkulov G."/>
            <person name="Milshina N.V."/>
            <person name="Mobarry C."/>
            <person name="Morris J."/>
            <person name="Moshrefi A."/>
            <person name="Mount S.M."/>
            <person name="Moy M."/>
            <person name="Murphy B."/>
            <person name="Murphy L."/>
            <person name="Muzny D.M."/>
            <person name="Nelson D.L."/>
            <person name="Nelson D.R."/>
            <person name="Nelson K.A."/>
            <person name="Nixon K."/>
            <person name="Nusskern D.R."/>
            <person name="Pacleb J.M."/>
            <person name="Palazzolo M."/>
            <person name="Pittman G.S."/>
            <person name="Pan S."/>
            <person name="Pollard J."/>
            <person name="Puri V."/>
            <person name="Reese M.G."/>
            <person name="Reinert K."/>
            <person name="Remington K."/>
            <person name="Saunders R.D.C."/>
            <person name="Scheeler F."/>
            <person name="Shen H."/>
            <person name="Shue B.C."/>
            <person name="Siden-Kiamos I."/>
            <person name="Simpson M."/>
            <person name="Skupski M.P."/>
            <person name="Smith T.J."/>
            <person name="Spier E."/>
            <person name="Spradling A.C."/>
            <person name="Stapleton M."/>
            <person name="Strong R."/>
            <person name="Sun E."/>
            <person name="Svirskas R."/>
            <person name="Tector C."/>
            <person name="Turner R."/>
            <person name="Venter E."/>
            <person name="Wang A.H."/>
            <person name="Wang X."/>
            <person name="Wang Z.-Y."/>
            <person name="Wassarman D.A."/>
            <person name="Weinstock G.M."/>
            <person name="Weissenbach J."/>
            <person name="Williams S.M."/>
            <person name="Woodage T."/>
            <person name="Worley K.C."/>
            <person name="Wu D."/>
            <person name="Yang S."/>
            <person name="Yao Q.A."/>
            <person name="Ye J."/>
            <person name="Yeh R.-F."/>
            <person name="Zaveri J.S."/>
            <person name="Zhan M."/>
            <person name="Zhang G."/>
            <person name="Zhao Q."/>
            <person name="Zheng L."/>
            <person name="Zheng X.H."/>
            <person name="Zhong F.N."/>
            <person name="Zhong W."/>
            <person name="Zhou X."/>
            <person name="Zhu S.C."/>
            <person name="Zhu X."/>
            <person name="Smith H.O."/>
            <person name="Gibbs R.A."/>
            <person name="Myers E.W."/>
            <person name="Rubin G.M."/>
            <person name="Venter J.C."/>
        </authorList>
    </citation>
    <scope>NUCLEOTIDE SEQUENCE [LARGE SCALE GENOMIC DNA]</scope>
    <source>
        <strain evidence="16">Berkeley</strain>
    </source>
</reference>
<reference evidence="16" key="2">
    <citation type="journal article" date="2002" name="Genome Biol.">
        <title>Annotation of the Drosophila melanogaster euchromatic genome: a systematic review.</title>
        <authorList>
            <person name="Misra S."/>
            <person name="Crosby M.A."/>
            <person name="Mungall C.J."/>
            <person name="Matthews B.B."/>
            <person name="Campbell K.S."/>
            <person name="Hradecky P."/>
            <person name="Huang Y."/>
            <person name="Kaminker J.S."/>
            <person name="Millburn G.H."/>
            <person name="Prochnik S.E."/>
            <person name="Smith C.D."/>
            <person name="Tupy J.L."/>
            <person name="Whitfield E.J."/>
            <person name="Bayraktaroglu L."/>
            <person name="Berman B.P."/>
            <person name="Bettencourt B.R."/>
            <person name="Celniker S.E."/>
            <person name="de Grey A.D.N.J."/>
            <person name="Drysdale R.A."/>
            <person name="Harris N.L."/>
            <person name="Richter J."/>
            <person name="Russo S."/>
            <person name="Schroeder A.J."/>
            <person name="Shu S.Q."/>
            <person name="Stapleton M."/>
            <person name="Yamada C."/>
            <person name="Ashburner M."/>
            <person name="Gelbart W.M."/>
            <person name="Rubin G.M."/>
            <person name="Lewis S.E."/>
        </authorList>
    </citation>
    <scope>GENOME REANNOTATION</scope>
    <source>
        <strain evidence="16">Berkeley</strain>
    </source>
</reference>
<reference evidence="14" key="3">
    <citation type="submission" date="2003-01" db="EMBL/GenBank/DDBJ databases">
        <authorList>
            <person name="Stapleton M."/>
            <person name="Brokstein P."/>
            <person name="Hong L."/>
            <person name="Agbayani A."/>
            <person name="Carlson J."/>
            <person name="Champe M."/>
            <person name="Chavez C."/>
            <person name="Dorsett V."/>
            <person name="Dresnek D."/>
            <person name="Farfan D."/>
            <person name="Frise E."/>
            <person name="George R."/>
            <person name="Gonzalez M."/>
            <person name="Guarin H."/>
            <person name="Kronmiller B."/>
            <person name="Li P."/>
            <person name="Liao G."/>
            <person name="Miranda A."/>
            <person name="Mungall C.J."/>
            <person name="Nunoo J."/>
            <person name="Pacleb J."/>
            <person name="Paragas V."/>
            <person name="Park S."/>
            <person name="Patel S."/>
            <person name="Phouanenavong S."/>
            <person name="Wan K."/>
            <person name="Yu C."/>
            <person name="Lewis S.E."/>
            <person name="Rubin G.M."/>
            <person name="Celniker S."/>
        </authorList>
    </citation>
    <scope>NUCLEOTIDE SEQUENCE [LARGE SCALE MRNA]</scope>
    <source>
        <strain evidence="14">Berkeley</strain>
        <tissue evidence="14">Head</tissue>
    </source>
</reference>
<reference evidence="12" key="4">
    <citation type="journal article" date="2006" name="Curr. Biol.">
        <title>The coiled-coil protein shrub controls neuronal morphogenesis in Drosophila.</title>
        <authorList>
            <person name="Sweeney N.T."/>
            <person name="Brenman J.E."/>
            <person name="Jan Y.N."/>
            <person name="Gao F.B."/>
        </authorList>
    </citation>
    <scope>FUNCTION</scope>
    <scope>DISRUPTION PHENOTYPE</scope>
</reference>
<reference evidence="12" key="5">
    <citation type="journal article" date="2011" name="J. Cell Biol.">
        <title>Synergy between the ESCRT-III complex and Deltex defines a ligand-independent Notch signal.</title>
        <authorList>
            <person name="Hori K."/>
            <person name="Sen A."/>
            <person name="Kirchhausen T."/>
            <person name="Artavanis-Tsakonas S."/>
        </authorList>
    </citation>
    <scope>FUNCTION</scope>
    <scope>SUBCELLULAR LOCATION</scope>
</reference>
<reference evidence="12" key="6">
    <citation type="journal article" date="2012" name="J. Cell Sci.">
        <title>The tumour suppressor Lethal (2) giant discs is required for the function of the ESCRT-III component Shrub/CHMP4.</title>
        <authorList>
            <person name="Troost T."/>
            <person name="Jaeckel S."/>
            <person name="Ohlenhard N."/>
            <person name="Klein T."/>
        </authorList>
    </citation>
    <scope>INTERACTION WITH L(2)GD1</scope>
</reference>
<reference evidence="12" key="7">
    <citation type="journal article" date="2015" name="Development">
        <title>Lgd regulates the activity of the BMP/Dpp signalling pathway during Drosophila oogenesis.</title>
        <authorList>
            <person name="Morawa K.S."/>
            <person name="Schneider M."/>
            <person name="Klein T."/>
        </authorList>
    </citation>
    <scope>FUNCTION</scope>
</reference>
<reference evidence="12" key="8">
    <citation type="journal article" date="2015" name="PLoS Genet.">
        <title>Abscission is regulated by the ESCRT-III protein shrub in Drosophila germline stem cells.</title>
        <authorList>
            <person name="Matias N.R."/>
            <person name="Mathieu J."/>
            <person name="Huynh J.R."/>
        </authorList>
    </citation>
    <scope>FUNCTION</scope>
    <scope>ACTIVITY REGULATION</scope>
    <scope>SUBCELLULAR LOCATION</scope>
    <scope>DISRUPTION PHENOTYPE</scope>
</reference>
<reference evidence="12" key="9">
    <citation type="journal article" date="2020" name="BMC Biol.">
        <title>Lethal (2) giant discs (Lgd)/CC2D1 is required for the full activity of the ESCRT machinery.</title>
        <authorList>
            <person name="Baeumers M."/>
            <person name="Ruhnau K."/>
            <person name="Breuer T."/>
            <person name="Pannen H."/>
            <person name="Goerlich B."/>
            <person name="Kniebel A."/>
            <person name="Haensch S."/>
            <person name="Weidtkamp-Peters S."/>
            <person name="Schmitt L."/>
            <person name="Klein T."/>
        </authorList>
    </citation>
    <scope>SUBCELLULAR LOCATION</scope>
    <scope>MUTAGENESIS OF GLU-86; GLU-90 AND GLU-93</scope>
</reference>
<reference evidence="12" key="10">
    <citation type="journal article" date="2021" name="Arch. Insect Biochem. Physiol.">
        <title>shrub is required for spermatogenesis of Drosophila melanogaster.</title>
        <authorList>
            <person name="Chen M.Y."/>
            <person name="Tayyeb A."/>
            <person name="Wang Y.F."/>
        </authorList>
    </citation>
    <scope>FUNCTION</scope>
    <scope>TISSUE SPECIFICITY</scope>
    <scope>DEVELOPMENTAL STAGE</scope>
    <scope>DISRUPTION PHENOTYPE</scope>
</reference>
<reference evidence="12" key="11">
    <citation type="journal article" date="2023" name="Development">
        <title>Cell-intrinsic and -extrinsic roles of the ESCRT-III subunit Shrub in abscission of Drosophila sensory organ precursors.</title>
        <authorList>
            <person name="Bruelle C."/>
            <person name="Pinot M."/>
            <person name="Daniel E."/>
            <person name="Daude M."/>
            <person name="Mathieu J."/>
            <person name="Le Borgne R."/>
        </authorList>
    </citation>
    <scope>FUNCTION</scope>
    <scope>SUBCELLULAR LOCATION</scope>
    <scope>DEVELOPMENTAL STAGE</scope>
</reference>
<reference evidence="17" key="12">
    <citation type="journal article" date="2016" name="Cell Rep.">
        <title>Electrostatic Interactions between Elongated Monomers Drive Filamentation of Drosophila Shrub, a Metazoan ESCRT-III Protein.</title>
        <authorList>
            <person name="McMillan B.J."/>
            <person name="Tibbe C."/>
            <person name="Jeon H."/>
            <person name="Drabek A.A."/>
            <person name="Klein T."/>
            <person name="Blacklow S.C."/>
        </authorList>
    </citation>
    <scope>X-RAY CRYSTALLOGRAPHY (2.76 ANGSTROMS) OF 18-143</scope>
    <scope>SUBUNIT</scope>
    <scope>INTERACTION WITH L(2)GD1</scope>
    <scope>MUTAGENESIS OF GLU-40; ARG-59; ASP-79 AND GLU-86</scope>
</reference>
<reference evidence="18" key="13">
    <citation type="journal article" date="2017" name="Cell Rep.">
        <title>Structural Basis for Regulation of ESCRT-III Complexes by Lgd.</title>
        <authorList>
            <person name="McMillan B.J."/>
            <person name="Tibbe C."/>
            <person name="Drabek A.A."/>
            <person name="Seegar T.C.M."/>
            <person name="Blacklow S.C."/>
            <person name="Klein T."/>
        </authorList>
    </citation>
    <scope>X-RAY CRYSTALLOGRAPHY (2.00 ANGSTROMS) OF 17-130 IN COMPLEX WITH L(2)GD1</scope>
    <scope>INTERACTION WITH L(2)GD1</scope>
    <scope>MUTAGENESIS OF ARG-59; ARG-70 AND GLU-86</scope>
</reference>
<comment type="function">
    <text evidence="2 3 5 6 10 11 13">Probable core polymerisation component of the endosomal sorting required for transport (ESCRT) III complex involved in multiple cellular processes requiring the outward bending of membranes, including vesicle budding, membrane repair and cytokinesis (Probable). The ESCRT pathway involves 4 complexes (ESCRT-0, -I, -II and -III) that sequentially assemble on the cytoplasmic side of membranes and induce membrane remodeling, budding and scission. As part of the ESCRT-III complex, involved in the budding of intraluminal vesicles (ILVs) into endosomes to form multivesicular bodies (MVBs), which target their contents for degradation via the endolysosomal pathway (PubMed:16713958). Involved in regulation of signal transduction pathways, including the Notch and BMP/decapentaplegic (dpp) pathways, by sequestering the intracellular domains of activated receptors into ILVs, isolating them from the cytoplasm and targeting them for lysosomal degradation (PubMed:22162134, PubMed:25804739). Involved in targeting ubiquitilated proteins, such as mono-ubiquitilanated N/Notch, to MVBs for degradation (PubMed:22162134, PubMed:33660341). Plays a role in wing development by regulating Notch signaling (PubMed:22162134). Involved in abscission of germline cells during oogenesis (PubMed:25647097). Involved in spermiogenesis (PubMed:33660341). Required for efficient cytoplasmic isolation and abscission during cytokinesis of epithelial sensory organ precursor cells (PubMed:37226981). May be involved in septate junction remodeling and maintenance (PubMed:37226981).</text>
</comment>
<comment type="activity regulation">
    <text evidence="5">May be regulated by aurB/Aurora kinase B-dependent phosphorylation.</text>
</comment>
<comment type="subunit">
    <text evidence="4 7 8">Homopolymer; forms elongated striated filaments of uniform ~10nm width (PubMed:27452459). Monomers interact in a staggered arrangement mediated by complementary charged electrostatic surfaces (PubMed:27452459). Interacts with l(2)gd1 (via DM14 domains 1 and 3); the interaction is direct and blocks access to the surface involved in homopolymerization (PubMed:22389409, PubMed:27452459, PubMed:28564595). This interaction may be required for the ESCRT-III complex role in multivesicular body formation (PubMed:22389409).</text>
</comment>
<comment type="subcellular location">
    <subcellularLocation>
        <location evidence="9">Endosome</location>
    </subcellularLocation>
    <subcellularLocation>
        <location evidence="3">Endosome</location>
        <location evidence="3">Multivesicular body</location>
    </subcellularLocation>
    <subcellularLocation>
        <location evidence="5 11">Midbody</location>
    </subcellularLocation>
    <text evidence="5 11">Localizes to ring canals and midbodies connecting germline stem cell and daughter cystoblast prior to abscission and to the spectrosome during G2 phase and mitosis (PubMed:25647097). Punctate localization along the fusome and at ring canals of germ cell cysts in region 2 of the germarium but not in region 1 (PubMed:25647097). Localizes to either side of the midbody during cytokinesis as daughter cells are poised for abscission (PubMed:37226981). Is recruited to finger like extrusions located near the midbody of neighboring dividing cells (PubMed:37226981).</text>
</comment>
<comment type="tissue specificity">
    <text evidence="10">Expressed at considerably higher levels in testis than in ovary (PubMed:33660341). Expressed in midgut, eye, mouthparts and male accessory gland (PubMed:33660341).</text>
</comment>
<comment type="developmental stage">
    <text evidence="10 11">In the pupal notum expressed in both epidermal cells and sensory organ precursor cells (at protein level) (PubMed:37226981). Low expression levels during embryogenesis (PubMed:33660341). Expression increases during larval development, peaking at the third instar larval stage and decreasing during pupation (PubMed:33660341). Increased expression levels in 1 day old adult males but not 1 day old adult females (PubMed:33660341).</text>
</comment>
<comment type="disruption phenotype">
    <text evidence="2 5 10">Lethal late in embryogenesis (PubMed:16713958). Dendritic arborization neurons have dramatically reduced dendritic field sizes but increased dendritic branching (PubMed:16713958). Increased ectopic axonal branching (PubMed:16713958). Conditional RNAi-mediated knockdown in germline stem-cells (GSCs) of the germarium delays or prevents abscission during GSC division resulting in multi-cell cysts that share a cytoplasm and undergo synchronous cell division (PubMed:25647097). Conditional RNAi-mediated knockdown in germline stem cells (GSCs) of the germarium produces egg chambers with 32 germline cells instead of 16 (PubMed:25647097). Conditional RNAi-mediated knockdown in testis results in defects in spermiogenesis, spermatid elongation and spermatid individualization, resulting in reduced male fertility (PubMed:33660341).</text>
</comment>
<comment type="miscellaneous">
    <text evidence="12">Some multidendritic neurons possess extensive and intricate dendrite outgrowth known as dendritic arborization that resemble trees when imaged by microscopy. Mutant larvae possess less extensive and smaller arborization patterns giving the name Shrub.</text>
</comment>
<comment type="similarity">
    <text evidence="12">Belongs to the SNF7 family.</text>
</comment>
<sequence>MSFFGKMFGGKKEVAPTTGEAIQKLRETENMLIKKQEFLEAKIEDELNIARKNASKNKRVALQALKKKKRLEKQLQQIDGTLSTIEMQREALESANTNTAVLTTMKNAADALKRAHQNMDVDKVHDMMDDIAEQQDVAREISDAISNPVAFGADLDDEDLERELDELEQENFDKEIIGIPEPTPTLPEAPTEDLPEKAKEKKKATTTTAVEDDDDPDMKQLLSWSN</sequence>
<keyword id="KW-0002">3D-structure</keyword>
<keyword id="KW-0175">Coiled coil</keyword>
<keyword id="KW-0967">Endosome</keyword>
<keyword id="KW-1185">Reference proteome</keyword>
<evidence type="ECO:0000256" key="1">
    <source>
        <dbReference type="SAM" id="MobiDB-lite"/>
    </source>
</evidence>
<evidence type="ECO:0000269" key="2">
    <source>
    </source>
</evidence>
<evidence type="ECO:0000269" key="3">
    <source>
    </source>
</evidence>
<evidence type="ECO:0000269" key="4">
    <source>
    </source>
</evidence>
<evidence type="ECO:0000269" key="5">
    <source>
    </source>
</evidence>
<evidence type="ECO:0000269" key="6">
    <source>
    </source>
</evidence>
<evidence type="ECO:0000269" key="7">
    <source>
    </source>
</evidence>
<evidence type="ECO:0000269" key="8">
    <source>
    </source>
</evidence>
<evidence type="ECO:0000269" key="9">
    <source>
    </source>
</evidence>
<evidence type="ECO:0000269" key="10">
    <source>
    </source>
</evidence>
<evidence type="ECO:0000269" key="11">
    <source>
    </source>
</evidence>
<evidence type="ECO:0000305" key="12"/>
<evidence type="ECO:0000305" key="13">
    <source>
    </source>
</evidence>
<evidence type="ECO:0000312" key="14">
    <source>
        <dbReference type="EMBL" id="AAL39276.1"/>
    </source>
</evidence>
<evidence type="ECO:0000312" key="15">
    <source>
        <dbReference type="FlyBase" id="FBgn0086656"/>
    </source>
</evidence>
<evidence type="ECO:0000312" key="16">
    <source>
        <dbReference type="Proteomes" id="UP000000803"/>
    </source>
</evidence>
<evidence type="ECO:0007744" key="17">
    <source>
        <dbReference type="PDB" id="5J45"/>
    </source>
</evidence>
<evidence type="ECO:0007744" key="18">
    <source>
        <dbReference type="PDB" id="5VO5"/>
    </source>
</evidence>
<evidence type="ECO:0007829" key="19">
    <source>
        <dbReference type="PDB" id="5VO5"/>
    </source>
</evidence>
<protein>
    <recommendedName>
        <fullName evidence="12">Charged multivesicular body protein 4</fullName>
        <shortName evidence="12">CHMP4</shortName>
    </recommendedName>
    <alternativeName>
        <fullName evidence="12">ESCRT-III complex core component shrb</fullName>
    </alternativeName>
    <alternativeName>
        <fullName evidence="12">Protein Shrub</fullName>
    </alternativeName>
</protein>
<feature type="chain" id="PRO_0000459790" description="Charged multivesicular body protein 4">
    <location>
        <begin position="1"/>
        <end position="226"/>
    </location>
</feature>
<feature type="region of interest" description="Disordered" evidence="1">
    <location>
        <begin position="169"/>
        <end position="226"/>
    </location>
</feature>
<feature type="coiled-coil region" evidence="7 8 17 18">
    <location>
        <begin position="22"/>
        <end position="88"/>
    </location>
</feature>
<feature type="mutagenesis site" description="Unable to rescue null mutant phenotype, probably due to disruption of electrostatic interactions required for homopolymerization." evidence="7">
    <original>E</original>
    <variation>K</variation>
    <location>
        <position position="40"/>
    </location>
</feature>
<feature type="mutagenesis site" description="Prevents homopolymerization due to disruption of electrostatic interaction." evidence="7 8">
    <original>R</original>
    <variation>E</variation>
    <location>
        <position position="59"/>
    </location>
</feature>
<feature type="mutagenesis site" description="Prevents homopolymerization due to disruption of electrostatic interaction." evidence="8">
    <original>R</original>
    <variation>E</variation>
    <location>
        <position position="70"/>
    </location>
</feature>
<feature type="mutagenesis site" description="Unable to rescue null mutant phenotype, probably due to disruption of electrostatic interactions required for homopolymerization." evidence="7">
    <original>D</original>
    <variation>K</variation>
    <location>
        <position position="79"/>
    </location>
</feature>
<feature type="mutagenesis site" description="Unable to rescue null mutant phenotype, probably due to disruption of electrostatic interactions required for homopolymerization." evidence="7">
    <original>E</original>
    <variation>K</variation>
    <location>
        <position position="86"/>
    </location>
</feature>
<feature type="mutagenesis site" description="Prevents homopolymerization due to disruption of electrostatic interaction. Abolishes binding to l(2)gd1. Unable to rescue null phenotype; when associated with R-90 and R-93." evidence="7 8 9">
    <original>E</original>
    <variation>R</variation>
    <location>
        <position position="86"/>
    </location>
</feature>
<feature type="mutagenesis site" description="Unable to rescue null phenotype; when associated with R-86 and R-93." evidence="9">
    <original>E</original>
    <variation>R</variation>
    <location>
        <position position="90"/>
    </location>
</feature>
<feature type="mutagenesis site" description="Unable to rescue null phenotype; when associated with R-86 and R-90." evidence="9">
    <original>E</original>
    <variation>R</variation>
    <location>
        <position position="93"/>
    </location>
</feature>
<feature type="helix" evidence="19">
    <location>
        <begin position="17"/>
        <end position="52"/>
    </location>
</feature>
<feature type="strand" evidence="19">
    <location>
        <begin position="54"/>
        <end position="56"/>
    </location>
</feature>
<feature type="helix" evidence="19">
    <location>
        <begin position="58"/>
        <end position="114"/>
    </location>
</feature>
<feature type="helix" evidence="19">
    <location>
        <begin position="119"/>
        <end position="128"/>
    </location>
</feature>
<name>CHM4_DROME</name>
<organism>
    <name type="scientific">Drosophila melanogaster</name>
    <name type="common">Fruit fly</name>
    <dbReference type="NCBI Taxonomy" id="7227"/>
    <lineage>
        <taxon>Eukaryota</taxon>
        <taxon>Metazoa</taxon>
        <taxon>Ecdysozoa</taxon>
        <taxon>Arthropoda</taxon>
        <taxon>Hexapoda</taxon>
        <taxon>Insecta</taxon>
        <taxon>Pterygota</taxon>
        <taxon>Neoptera</taxon>
        <taxon>Endopterygota</taxon>
        <taxon>Diptera</taxon>
        <taxon>Brachycera</taxon>
        <taxon>Muscomorpha</taxon>
        <taxon>Ephydroidea</taxon>
        <taxon>Drosophilidae</taxon>
        <taxon>Drosophila</taxon>
        <taxon>Sophophora</taxon>
    </lineage>
</organism>
<gene>
    <name evidence="15" type="primary">shrb</name>
    <name evidence="15" type="synonym">Shrub</name>
    <name evidence="15" type="synonym">Snf7</name>
    <name evidence="15" type="synonym">Vps32</name>
    <name evidence="15" type="ORF">CG8055</name>
</gene>
<proteinExistence type="evidence at protein level"/>
<dbReference type="EMBL" id="AE013599">
    <property type="protein sequence ID" value="AAF58977.2"/>
    <property type="molecule type" value="Genomic_DNA"/>
</dbReference>
<dbReference type="EMBL" id="AY069131">
    <property type="protein sequence ID" value="AAL39276.1"/>
    <property type="molecule type" value="mRNA"/>
</dbReference>
<dbReference type="RefSeq" id="NP_610462.3">
    <property type="nucleotide sequence ID" value="NM_136618.5"/>
</dbReference>
<dbReference type="PDB" id="5J45">
    <property type="method" value="X-ray"/>
    <property type="resolution" value="2.76 A"/>
    <property type="chains" value="A=18-143"/>
</dbReference>
<dbReference type="PDB" id="5VO5">
    <property type="method" value="X-ray"/>
    <property type="resolution" value="2.00 A"/>
    <property type="chains" value="A=17-130"/>
</dbReference>
<dbReference type="PDBsum" id="5J45"/>
<dbReference type="PDBsum" id="5VO5"/>
<dbReference type="SMR" id="Q8T0Q4"/>
<dbReference type="ComplexPortal" id="CPX-2459">
    <property type="entry name" value="ESCRT-III complex"/>
</dbReference>
<dbReference type="FunCoup" id="Q8T0Q4">
    <property type="interactions" value="1065"/>
</dbReference>
<dbReference type="IntAct" id="Q8T0Q4">
    <property type="interactions" value="33"/>
</dbReference>
<dbReference type="STRING" id="7227.FBpp0087704"/>
<dbReference type="GlyGen" id="Q8T0Q4">
    <property type="glycosylation" value="2 sites"/>
</dbReference>
<dbReference type="PaxDb" id="7227-FBpp0087704"/>
<dbReference type="DNASU" id="35933"/>
<dbReference type="EnsemblMetazoa" id="FBtr0088623">
    <property type="protein sequence ID" value="FBpp0087704"/>
    <property type="gene ID" value="FBgn0086656"/>
</dbReference>
<dbReference type="GeneID" id="35933"/>
<dbReference type="KEGG" id="dme:Dmel_CG8055"/>
<dbReference type="UCSC" id="CG8055-RA">
    <property type="organism name" value="d. melanogaster"/>
</dbReference>
<dbReference type="AGR" id="FB:FBgn0086656"/>
<dbReference type="CTD" id="35933"/>
<dbReference type="FlyBase" id="FBgn0086656">
    <property type="gene designation" value="shrb"/>
</dbReference>
<dbReference type="VEuPathDB" id="VectorBase:FBgn0086656"/>
<dbReference type="eggNOG" id="KOG1656">
    <property type="taxonomic scope" value="Eukaryota"/>
</dbReference>
<dbReference type="GeneTree" id="ENSGT00940000154663"/>
<dbReference type="HOGENOM" id="CLU_071097_0_0_1"/>
<dbReference type="OMA" id="TAHNDMD"/>
<dbReference type="OrthoDB" id="5592979at2759"/>
<dbReference type="Reactome" id="R-DME-1632852">
    <property type="pathway name" value="Macroautophagy"/>
</dbReference>
<dbReference type="Reactome" id="R-DME-917729">
    <property type="pathway name" value="Endosomal Sorting Complex Required For Transport (ESCRT)"/>
</dbReference>
<dbReference type="Reactome" id="R-DME-9668328">
    <property type="pathway name" value="Sealing of the nuclear envelope (NE) by ESCRT-III"/>
</dbReference>
<dbReference type="BioGRID-ORCS" id="35933">
    <property type="hits" value="0 hits in 3 CRISPR screens"/>
</dbReference>
<dbReference type="GenomeRNAi" id="35933"/>
<dbReference type="Proteomes" id="UP000000803">
    <property type="component" value="Chromosome 2R"/>
</dbReference>
<dbReference type="Bgee" id="FBgn0086656">
    <property type="expression patterns" value="Expressed in adult enteroendocrine precursor cell in adult midgut (Drosophila) and 266 other cell types or tissues"/>
</dbReference>
<dbReference type="GO" id="GO:0070938">
    <property type="term" value="C:contractile ring"/>
    <property type="evidence" value="ECO:0000314"/>
    <property type="project" value="FlyBase"/>
</dbReference>
<dbReference type="GO" id="GO:0009898">
    <property type="term" value="C:cytoplasmic side of plasma membrane"/>
    <property type="evidence" value="ECO:0000318"/>
    <property type="project" value="GO_Central"/>
</dbReference>
<dbReference type="GO" id="GO:0000815">
    <property type="term" value="C:ESCRT III complex"/>
    <property type="evidence" value="ECO:0000250"/>
    <property type="project" value="FlyBase"/>
</dbReference>
<dbReference type="GO" id="GO:0045169">
    <property type="term" value="C:fusome"/>
    <property type="evidence" value="ECO:0000314"/>
    <property type="project" value="FlyBase"/>
</dbReference>
<dbReference type="GO" id="GO:0030496">
    <property type="term" value="C:midbody"/>
    <property type="evidence" value="ECO:0000314"/>
    <property type="project" value="FlyBase"/>
</dbReference>
<dbReference type="GO" id="GO:0005771">
    <property type="term" value="C:multivesicular body"/>
    <property type="evidence" value="ECO:0000314"/>
    <property type="project" value="FlyBase"/>
</dbReference>
<dbReference type="GO" id="GO:0043025">
    <property type="term" value="C:neuronal cell body"/>
    <property type="evidence" value="ECO:0000314"/>
    <property type="project" value="FlyBase"/>
</dbReference>
<dbReference type="GO" id="GO:1990635">
    <property type="term" value="C:proximal dendrite"/>
    <property type="evidence" value="ECO:0000314"/>
    <property type="project" value="FlyBase"/>
</dbReference>
<dbReference type="GO" id="GO:0006914">
    <property type="term" value="P:autophagy"/>
    <property type="evidence" value="ECO:0000315"/>
    <property type="project" value="FlyBase"/>
</dbReference>
<dbReference type="GO" id="GO:0048813">
    <property type="term" value="P:dendrite morphogenesis"/>
    <property type="evidence" value="ECO:0000315"/>
    <property type="project" value="FlyBase"/>
</dbReference>
<dbReference type="GO" id="GO:0032509">
    <property type="term" value="P:endosome transport via multivesicular body sorting pathway"/>
    <property type="evidence" value="ECO:0000315"/>
    <property type="project" value="UniProtKB"/>
</dbReference>
<dbReference type="GO" id="GO:0048132">
    <property type="term" value="P:female germ-line stem cell asymmetric division"/>
    <property type="evidence" value="ECO:0000315"/>
    <property type="project" value="FlyBase"/>
</dbReference>
<dbReference type="GO" id="GO:0032511">
    <property type="term" value="P:late endosome to vacuole transport via multivesicular body sorting pathway"/>
    <property type="evidence" value="ECO:0000318"/>
    <property type="project" value="GO_Central"/>
</dbReference>
<dbReference type="GO" id="GO:0000281">
    <property type="term" value="P:mitotic cytokinesis"/>
    <property type="evidence" value="ECO:0000315"/>
    <property type="project" value="FlyBase"/>
</dbReference>
<dbReference type="GO" id="GO:0016322">
    <property type="term" value="P:neuron remodeling"/>
    <property type="evidence" value="ECO:0000315"/>
    <property type="project" value="FlyBase"/>
</dbReference>
<dbReference type="GO" id="GO:0046718">
    <property type="term" value="P:symbiont entry into host cell"/>
    <property type="evidence" value="ECO:0007001"/>
    <property type="project" value="FlyBase"/>
</dbReference>
<dbReference type="GO" id="GO:0043162">
    <property type="term" value="P:ubiquitin-dependent protein catabolic process via the multivesicular body sorting pathway"/>
    <property type="evidence" value="ECO:0000315"/>
    <property type="project" value="FlyBase"/>
</dbReference>
<dbReference type="GO" id="GO:0006900">
    <property type="term" value="P:vesicle budding from membrane"/>
    <property type="evidence" value="ECO:0000318"/>
    <property type="project" value="GO_Central"/>
</dbReference>
<dbReference type="FunFam" id="1.10.287.1060:FF:000001">
    <property type="entry name" value="Charged multivesicular body protein 4b"/>
    <property type="match status" value="1"/>
</dbReference>
<dbReference type="Gene3D" id="6.10.250.1710">
    <property type="match status" value="1"/>
</dbReference>
<dbReference type="Gene3D" id="1.10.287.1060">
    <property type="entry name" value="ESAT-6-like"/>
    <property type="match status" value="1"/>
</dbReference>
<dbReference type="InterPro" id="IPR005024">
    <property type="entry name" value="Snf7_fam"/>
</dbReference>
<dbReference type="PANTHER" id="PTHR22761">
    <property type="entry name" value="CHARGED MULTIVESICULAR BODY PROTEIN"/>
    <property type="match status" value="1"/>
</dbReference>
<dbReference type="PANTHER" id="PTHR22761:SF10">
    <property type="entry name" value="GH13992P"/>
    <property type="match status" value="1"/>
</dbReference>
<dbReference type="Pfam" id="PF03357">
    <property type="entry name" value="Snf7"/>
    <property type="match status" value="1"/>
</dbReference>